<feature type="initiator methionine" description="Removed" evidence="1">
    <location>
        <position position="1"/>
    </location>
</feature>
<feature type="chain" id="PRO_0000105543" description="Flagellar hook-basal body complex protein FliE">
    <location>
        <begin position="2"/>
        <end position="104"/>
    </location>
</feature>
<reference key="1">
    <citation type="journal article" date="2001" name="Nature">
        <title>Genome sequence of enterohaemorrhagic Escherichia coli O157:H7.</title>
        <authorList>
            <person name="Perna N.T."/>
            <person name="Plunkett G. III"/>
            <person name="Burland V."/>
            <person name="Mau B."/>
            <person name="Glasner J.D."/>
            <person name="Rose D.J."/>
            <person name="Mayhew G.F."/>
            <person name="Evans P.S."/>
            <person name="Gregor J."/>
            <person name="Kirkpatrick H.A."/>
            <person name="Posfai G."/>
            <person name="Hackett J."/>
            <person name="Klink S."/>
            <person name="Boutin A."/>
            <person name="Shao Y."/>
            <person name="Miller L."/>
            <person name="Grotbeck E.J."/>
            <person name="Davis N.W."/>
            <person name="Lim A."/>
            <person name="Dimalanta E.T."/>
            <person name="Potamousis K."/>
            <person name="Apodaca J."/>
            <person name="Anantharaman T.S."/>
            <person name="Lin J."/>
            <person name="Yen G."/>
            <person name="Schwartz D.C."/>
            <person name="Welch R.A."/>
            <person name="Blattner F.R."/>
        </authorList>
    </citation>
    <scope>NUCLEOTIDE SEQUENCE [LARGE SCALE GENOMIC DNA]</scope>
    <source>
        <strain>O157:H7 / EDL933 / ATCC 700927 / EHEC</strain>
    </source>
</reference>
<reference key="2">
    <citation type="journal article" date="2001" name="DNA Res.">
        <title>Complete genome sequence of enterohemorrhagic Escherichia coli O157:H7 and genomic comparison with a laboratory strain K-12.</title>
        <authorList>
            <person name="Hayashi T."/>
            <person name="Makino K."/>
            <person name="Ohnishi M."/>
            <person name="Kurokawa K."/>
            <person name="Ishii K."/>
            <person name="Yokoyama K."/>
            <person name="Han C.-G."/>
            <person name="Ohtsubo E."/>
            <person name="Nakayama K."/>
            <person name="Murata T."/>
            <person name="Tanaka M."/>
            <person name="Tobe T."/>
            <person name="Iida T."/>
            <person name="Takami H."/>
            <person name="Honda T."/>
            <person name="Sasakawa C."/>
            <person name="Ogasawara N."/>
            <person name="Yasunaga T."/>
            <person name="Kuhara S."/>
            <person name="Shiba T."/>
            <person name="Hattori M."/>
            <person name="Shinagawa H."/>
        </authorList>
    </citation>
    <scope>NUCLEOTIDE SEQUENCE [LARGE SCALE GENOMIC DNA]</scope>
    <source>
        <strain>O157:H7 / Sakai / RIMD 0509952 / EHEC</strain>
    </source>
</reference>
<accession>P0A8T6</accession>
<accession>P25797</accession>
<organism>
    <name type="scientific">Escherichia coli O157:H7</name>
    <dbReference type="NCBI Taxonomy" id="83334"/>
    <lineage>
        <taxon>Bacteria</taxon>
        <taxon>Pseudomonadati</taxon>
        <taxon>Pseudomonadota</taxon>
        <taxon>Gammaproteobacteria</taxon>
        <taxon>Enterobacterales</taxon>
        <taxon>Enterobacteriaceae</taxon>
        <taxon>Escherichia</taxon>
    </lineage>
</organism>
<dbReference type="EMBL" id="AE005174">
    <property type="protein sequence ID" value="AAG56952.1"/>
    <property type="molecule type" value="Genomic_DNA"/>
</dbReference>
<dbReference type="EMBL" id="BA000007">
    <property type="protein sequence ID" value="BAB36099.1"/>
    <property type="molecule type" value="Genomic_DNA"/>
</dbReference>
<dbReference type="PIR" id="D85811">
    <property type="entry name" value="D85811"/>
</dbReference>
<dbReference type="PIR" id="D90963">
    <property type="entry name" value="D90963"/>
</dbReference>
<dbReference type="RefSeq" id="NP_310703.1">
    <property type="nucleotide sequence ID" value="NC_002695.1"/>
</dbReference>
<dbReference type="RefSeq" id="WP_001274299.1">
    <property type="nucleotide sequence ID" value="NZ_VOAI01000028.1"/>
</dbReference>
<dbReference type="SMR" id="P0A8T6"/>
<dbReference type="STRING" id="155864.Z3027"/>
<dbReference type="GeneID" id="912495"/>
<dbReference type="GeneID" id="93775248"/>
<dbReference type="KEGG" id="ece:Z3027"/>
<dbReference type="KEGG" id="ecs:ECs_2676"/>
<dbReference type="PATRIC" id="fig|386585.9.peg.2803"/>
<dbReference type="eggNOG" id="COG1677">
    <property type="taxonomic scope" value="Bacteria"/>
</dbReference>
<dbReference type="HOGENOM" id="CLU_147249_0_2_6"/>
<dbReference type="OMA" id="NDVMIDM"/>
<dbReference type="Proteomes" id="UP000000558">
    <property type="component" value="Chromosome"/>
</dbReference>
<dbReference type="Proteomes" id="UP000002519">
    <property type="component" value="Chromosome"/>
</dbReference>
<dbReference type="GO" id="GO:0009425">
    <property type="term" value="C:bacterial-type flagellum basal body"/>
    <property type="evidence" value="ECO:0007669"/>
    <property type="project" value="UniProtKB-SubCell"/>
</dbReference>
<dbReference type="GO" id="GO:0003774">
    <property type="term" value="F:cytoskeletal motor activity"/>
    <property type="evidence" value="ECO:0007669"/>
    <property type="project" value="InterPro"/>
</dbReference>
<dbReference type="GO" id="GO:0005198">
    <property type="term" value="F:structural molecule activity"/>
    <property type="evidence" value="ECO:0007669"/>
    <property type="project" value="InterPro"/>
</dbReference>
<dbReference type="GO" id="GO:0071973">
    <property type="term" value="P:bacterial-type flagellum-dependent cell motility"/>
    <property type="evidence" value="ECO:0007669"/>
    <property type="project" value="InterPro"/>
</dbReference>
<dbReference type="HAMAP" id="MF_00724">
    <property type="entry name" value="FliE"/>
    <property type="match status" value="1"/>
</dbReference>
<dbReference type="InterPro" id="IPR001624">
    <property type="entry name" value="FliE"/>
</dbReference>
<dbReference type="NCBIfam" id="TIGR00205">
    <property type="entry name" value="fliE"/>
    <property type="match status" value="1"/>
</dbReference>
<dbReference type="PANTHER" id="PTHR34653">
    <property type="match status" value="1"/>
</dbReference>
<dbReference type="PANTHER" id="PTHR34653:SF1">
    <property type="entry name" value="FLAGELLAR HOOK-BASAL BODY COMPLEX PROTEIN FLIE"/>
    <property type="match status" value="1"/>
</dbReference>
<dbReference type="Pfam" id="PF02049">
    <property type="entry name" value="FliE"/>
    <property type="match status" value="1"/>
</dbReference>
<dbReference type="PRINTS" id="PR01006">
    <property type="entry name" value="FLGHOOKFLIE"/>
</dbReference>
<comment type="subcellular location">
    <subcellularLocation>
        <location evidence="1">Bacterial flagellum basal body</location>
    </subcellularLocation>
</comment>
<comment type="similarity">
    <text evidence="2">Belongs to the FliE family.</text>
</comment>
<name>FLIE_ECO57</name>
<protein>
    <recommendedName>
        <fullName>Flagellar hook-basal body complex protein FliE</fullName>
    </recommendedName>
</protein>
<proteinExistence type="inferred from homology"/>
<keyword id="KW-0975">Bacterial flagellum</keyword>
<keyword id="KW-1185">Reference proteome</keyword>
<sequence length="104" mass="11127">MSAIQGIEGVISQLQATAMSARAQESLPQPTISFAGQLHAALDRISDTQTAARTQAEKFTLGEPGVALNDVMTDMQKASVSMQMGIQVRNKLVAAYQEVMSMQV</sequence>
<evidence type="ECO:0000250" key="1"/>
<evidence type="ECO:0000305" key="2"/>
<gene>
    <name type="primary">fliE</name>
    <name type="ordered locus">Z3027</name>
    <name type="ordered locus">ECs2676</name>
</gene>